<organismHost>
    <name type="scientific">Homo sapiens</name>
    <name type="common">Human</name>
    <dbReference type="NCBI Taxonomy" id="9606"/>
</organismHost>
<accession>P03240</accession>
<keyword id="KW-0053">Apoptosis</keyword>
<keyword id="KW-0244">Early protein</keyword>
<keyword id="KW-1035">Host cytoplasm</keyword>
<keyword id="KW-1048">Host nucleus</keyword>
<keyword id="KW-0945">Host-virus interaction</keyword>
<keyword id="KW-0507">mRNA processing</keyword>
<keyword id="KW-0508">mRNA splicing</keyword>
<keyword id="KW-1185">Reference proteome</keyword>
<reference key="1">
    <citation type="journal article" date="1981" name="Nucleic Acids Res.">
        <title>Nucleotide sequence of adenovirus 2 DNA fragment encoding for the carboxylic region of the fiber protein and the entire E4 region.</title>
        <authorList>
            <person name="Herisse J."/>
            <person name="Rigolet M."/>
            <person name="Dupont de Dinechin S."/>
            <person name="Galibert F."/>
        </authorList>
    </citation>
    <scope>NUCLEOTIDE SEQUENCE [GENOMIC DNA]</scope>
</reference>
<reference key="2">
    <citation type="journal article" date="1993" name="J. Virol.">
        <title>Adenovirus E4orf4 protein binds to protein phosphatase 2A, and the complex down regulates E1A-enhanced junB transcription.</title>
        <authorList>
            <person name="Kleinberger T."/>
            <person name="Shenk T."/>
        </authorList>
    </citation>
    <scope>INTERACTION WITH HOST PPP2R2A</scope>
</reference>
<reference key="3">
    <citation type="journal article" date="1996" name="J. Virol.">
        <title>Adenovirus E4 open reading frame 4 protein autoregulates E4 transcription by inhibiting E1A transactivation of the E4 promoter.</title>
        <authorList>
            <person name="Bondesson M."/>
            <person name="Ohman K."/>
            <person name="Manervik M."/>
            <person name="Fan S."/>
            <person name="Akusjarvi G."/>
        </authorList>
    </citation>
    <scope>FUNCTION</scope>
</reference>
<reference key="4">
    <citation type="journal article" date="1998" name="Nature">
        <title>Regulation of adenovirus alternative RNA splicing by dephosphorylation of SR proteins.</title>
        <authorList>
            <person name="Kanopka A."/>
            <person name="Muhlemann O."/>
            <person name="Petersen-Mahrt S."/>
            <person name="Estmer C."/>
            <person name="Ohrmalm C."/>
            <person name="Akusjarvi G."/>
        </authorList>
    </citation>
    <scope>FUNCTION</scope>
</reference>
<reference key="5">
    <citation type="journal article" date="1998" name="J. Virol.">
        <title>The early region 4 orf4 protein of human adenovirus type 5 induces p53-independent cell death by apoptosis.</title>
        <authorList>
            <person name="Marcellus R.C."/>
            <person name="Lavoie J.N."/>
            <person name="Boivin D."/>
            <person name="Shore G.C."/>
            <person name="Ketner G."/>
            <person name="Branton P.E."/>
        </authorList>
    </citation>
    <scope>FUNCTION</scope>
    <source>
        <strain>Human adenovirus C serotype 5</strain>
    </source>
</reference>
<reference key="6">
    <citation type="journal article" date="2000" name="Oncogene">
        <title>Adenovirus E4orf4 protein interacts with both Balpha and B' subunits of protein phosphatase 2A, but E4orf4-induced apoptosis is mediated only by the interaction with Balpha.</title>
        <authorList>
            <person name="Shtrichman R."/>
            <person name="Sharf R."/>
            <person name="Kleinberger T."/>
        </authorList>
    </citation>
    <scope>INTERACTION WITH HOST PPP2R5E</scope>
</reference>
<reference key="7">
    <citation type="journal article" date="2000" name="J. Cell Biol.">
        <title>Adenovirus E4 open reading frame 4-induced apoptosis involves dysregulation of Src family kinases.</title>
        <authorList>
            <person name="Lavoie J.N."/>
            <person name="Champagne C."/>
            <person name="Gingras M.C."/>
            <person name="Robert A."/>
        </authorList>
    </citation>
    <scope>INTERACTION WITH HOST SRC</scope>
    <scope>SUBCELLULAR LOCATION</scope>
</reference>
<reference key="8">
    <citation type="journal article" date="2000" name="J. Virol.">
        <title>Induction of p53-independent apoptosis by the adenovirus E4orf4 protein requires binding to the Balpha subunit of protein phosphatase 2A.</title>
        <authorList>
            <person name="Marcellus R.C."/>
            <person name="Chan H."/>
            <person name="Paquette D."/>
            <person name="Thirlwell S."/>
            <person name="Boivin D."/>
            <person name="Branton P.E."/>
        </authorList>
    </citation>
    <scope>INTERACTION WITH HOST PPP2R2A</scope>
</reference>
<reference key="9">
    <citation type="journal article" date="2002" name="Mol. Cell. Biol.">
        <title>Cytoplasmic death signal triggered by SRC-mediated phosphorylation of the adenovirus E4orf4 protein.</title>
        <authorList>
            <person name="Gingras M.C."/>
            <person name="Champagne C."/>
            <person name="Roy M."/>
            <person name="Lavoie J.N."/>
        </authorList>
    </citation>
    <scope>MUTAGENESIS OF TYR-26; TYR-42 AND TYR-62</scope>
</reference>
<reference key="10">
    <citation type="journal article" date="2004" name="J. Biol. Chem.">
        <title>Activation of adenovirus type 2 early region 4 ORF4 cytoplasmic death function by direct binding to Src kinase domain.</title>
        <authorList>
            <person name="Champagne C."/>
            <person name="Landry M.C."/>
            <person name="Gingras M.C."/>
            <person name="Lavoie J.N."/>
        </authorList>
    </citation>
    <scope>INTERACTION WITH HOST SRC</scope>
</reference>
<reference key="11">
    <citation type="journal article" date="2004" name="Oncogene">
        <title>Nuclear localization of the adenovirus E4orf4 protein is mediated through an arginine-rich motif and correlates with cell death.</title>
        <authorList>
            <person name="Miron M.J."/>
            <person name="Gallouzi I.E."/>
            <person name="Lavoie J.N."/>
            <person name="Branton P.E."/>
        </authorList>
    </citation>
    <scope>SUBCELLULAR LOCATION</scope>
</reference>
<reference key="12">
    <citation type="journal article" date="2008" name="J. Virol.">
        <title>Adenovirus E4orf4 protein downregulates MYC expression through interaction with the PP2A-B55 subunit.</title>
        <authorList>
            <person name="Ben-Israel H."/>
            <person name="Sharf R."/>
            <person name="Rechavi G."/>
            <person name="Kleinberger T."/>
        </authorList>
    </citation>
    <scope>INTERACTION WITH HOST PPP2R2A</scope>
</reference>
<reference key="13">
    <citation type="journal article" date="2005" name="EMBO J.">
        <title>Adenoviral proteins mimic nutrient/growth signals to activate the mTOR pathway for viral replication.</title>
        <authorList>
            <person name="O'Shea C."/>
            <person name="Klupsch K."/>
            <person name="Choi S."/>
            <person name="Bagus B."/>
            <person name="Soria C."/>
            <person name="Shen J."/>
            <person name="McCormick F."/>
            <person name="Stokoe D."/>
        </authorList>
    </citation>
    <scope>FUNCTION</scope>
</reference>
<reference key="14">
    <citation type="journal article" date="2009" name="J. Virol.">
        <title>Localization and importance of the adenovirus E4orf4 protein during lytic infection.</title>
        <authorList>
            <person name="Miron M.J."/>
            <person name="Blanchette P."/>
            <person name="Groitl P."/>
            <person name="Dallaire F."/>
            <person name="Teodoro J.G."/>
            <person name="Li S."/>
            <person name="Dobner T."/>
            <person name="Branton P.E."/>
        </authorList>
    </citation>
    <scope>SUBCELLULAR LOCATION</scope>
    <scope>MUTAGENESIS OF 66-ARG--ARG-75</scope>
    <source>
        <strain>Human adenovirus C serotype 5</strain>
    </source>
</reference>
<reference key="15">
    <citation type="journal article" date="2011" name="Nucleic Acids Res.">
        <title>The adenovirus E4orf4 protein targets PP2A to the ACF chromatin-remodeling factor and induces cell death through regulation of SNF2h-containing complexes.</title>
        <authorList>
            <person name="Brestovitsky A."/>
            <person name="Sharf R."/>
            <person name="Mittelman K."/>
            <person name="Kleinberger T."/>
        </authorList>
    </citation>
    <scope>INTERACTION WITH HOST BAZ1A/ACF1</scope>
</reference>
<reference key="16">
    <citation type="journal article" date="2005" name="Front. Biosci.">
        <title>Functions of the adenovirus E4 proteins and their impact on viral vectors.</title>
        <authorList>
            <person name="Weitzman M.D."/>
        </authorList>
    </citation>
    <scope>REVIEW</scope>
</reference>
<reference key="17">
    <citation type="journal article" date="2008" name="Front. Biosci.">
        <title>Temporal regulation of adenovirus major late alternative RNA splicing.</title>
        <authorList>
            <person name="Akusjarvi G."/>
        </authorList>
    </citation>
    <scope>REVIEW</scope>
</reference>
<protein>
    <recommendedName>
        <fullName>Early 4 ORF4 protein</fullName>
        <shortName>E4 ORF4</shortName>
    </recommendedName>
    <alternativeName>
        <fullName>Early E4 13 kDa protein</fullName>
    </alternativeName>
</protein>
<sequence length="114" mass="13321">MVLPALPAPPVCDSQNECVGWLGVAYSAVVDVIRAAAHEGVYIEPEARGRLDALREWIYYNYYTERAKRRDRRRRSVCHARTWFCFRKYDYVRRSIWHDTTTNTISVVSAHSVQ</sequence>
<dbReference type="EMBL" id="J01917">
    <property type="status" value="NOT_ANNOTATED_CDS"/>
    <property type="molecule type" value="Genomic_DNA"/>
</dbReference>
<dbReference type="PIR" id="A03806">
    <property type="entry name" value="Q4ADD2"/>
</dbReference>
<dbReference type="RefSeq" id="AP_000193.1">
    <property type="nucleotide sequence ID" value="AC_000007.1"/>
</dbReference>
<dbReference type="SMR" id="P03240"/>
<dbReference type="Proteomes" id="UP000008167">
    <property type="component" value="Segment"/>
</dbReference>
<dbReference type="GO" id="GO:0030430">
    <property type="term" value="C:host cell cytoplasm"/>
    <property type="evidence" value="ECO:0007669"/>
    <property type="project" value="UniProtKB-SubCell"/>
</dbReference>
<dbReference type="GO" id="GO:0042025">
    <property type="term" value="C:host cell nucleus"/>
    <property type="evidence" value="ECO:0007669"/>
    <property type="project" value="UniProtKB-SubCell"/>
</dbReference>
<dbReference type="GO" id="GO:0006397">
    <property type="term" value="P:mRNA processing"/>
    <property type="evidence" value="ECO:0007669"/>
    <property type="project" value="UniProtKB-KW"/>
</dbReference>
<dbReference type="GO" id="GO:0008380">
    <property type="term" value="P:RNA splicing"/>
    <property type="evidence" value="ECO:0007669"/>
    <property type="project" value="UniProtKB-KW"/>
</dbReference>
<dbReference type="InterPro" id="IPR008680">
    <property type="entry name" value="M_adenovirusE4"/>
</dbReference>
<dbReference type="Pfam" id="PF05385">
    <property type="entry name" value="Adeno_E4"/>
    <property type="match status" value="1"/>
</dbReference>
<evidence type="ECO:0000269" key="1">
    <source>
    </source>
</evidence>
<evidence type="ECO:0000269" key="2">
    <source>
    </source>
</evidence>
<evidence type="ECO:0000269" key="3">
    <source>
    </source>
</evidence>
<evidence type="ECO:0000269" key="4">
    <source>
    </source>
</evidence>
<evidence type="ECO:0000269" key="5">
    <source>
    </source>
</evidence>
<evidence type="ECO:0000269" key="6">
    <source>
    </source>
</evidence>
<evidence type="ECO:0000269" key="7">
    <source>
    </source>
</evidence>
<evidence type="ECO:0000269" key="8">
    <source>
    </source>
</evidence>
<evidence type="ECO:0000269" key="9">
    <source>
    </source>
</evidence>
<evidence type="ECO:0000269" key="10">
    <source>
    </source>
</evidence>
<evidence type="ECO:0000269" key="11">
    <source>
    </source>
</evidence>
<evidence type="ECO:0000269" key="12">
    <source>
    </source>
</evidence>
<evidence type="ECO:0000269" key="13">
    <source>
    </source>
</evidence>
<evidence type="ECO:0000305" key="14"/>
<organism>
    <name type="scientific">Human adenovirus C serotype 2</name>
    <name type="common">HAdV-2</name>
    <name type="synonym">Human adenovirus 2</name>
    <dbReference type="NCBI Taxonomy" id="10515"/>
    <lineage>
        <taxon>Viruses</taxon>
        <taxon>Varidnaviria</taxon>
        <taxon>Bamfordvirae</taxon>
        <taxon>Preplasmiviricota</taxon>
        <taxon>Tectiliviricetes</taxon>
        <taxon>Rowavirales</taxon>
        <taxon>Adenoviridae</taxon>
        <taxon>Mastadenovirus</taxon>
        <taxon>Human mastadenovirus C</taxon>
    </lineage>
</organism>
<comment type="function">
    <text evidence="6 11 12 13">Plays a role in viral alternative pre-mRNA splicing. Activates dephosphorylation by protein phosphatase 2A of host SR proteins and converts their splicing properties. When expressed alone ex vivo, induces p53/TP53-independent apoptosis called cytoplasmic death. May mimic nutrient/growth signals to activate the host mTOR pathway.</text>
</comment>
<comment type="subunit">
    <text evidence="1 2 3 5 7 9 10">Interacts with host BAZ1A/ACF1, host PPP2R2A/PP2a-B55alpha subunit, and host PPP2R5E/PP2a-B'B56 subunit. May interact with host SRC.</text>
</comment>
<comment type="subcellular location">
    <subcellularLocation>
        <location>Host nucleus</location>
    </subcellularLocation>
    <subcellularLocation>
        <location>Host cytoplasm</location>
    </subcellularLocation>
    <text>When expressed alone ex-vivo the majority is found in the nucleus. Tyrosinephosphorylation would promote cytoplasmic localization.</text>
</comment>
<comment type="PTM">
    <text>May be phosphorylated by host SRC kinase.</text>
</comment>
<comment type="similarity">
    <text evidence="14">Belongs to the adenoviridae E4 ORF4 family.</text>
</comment>
<proteinExistence type="evidence at protein level"/>
<feature type="chain" id="PRO_0000221773" description="Early 4 ORF4 protein">
    <location>
        <begin position="1"/>
        <end position="114"/>
    </location>
</feature>
<feature type="short sequence motif" description="Nuclear localization signal">
    <location>
        <begin position="66"/>
        <end position="75"/>
    </location>
</feature>
<feature type="mutagenesis site" description="Partial loss of phosphorylation ex vivo." evidence="4">
    <original>Y</original>
    <variation>F</variation>
    <location>
        <position position="26"/>
    </location>
</feature>
<feature type="mutagenesis site" description="Partial loss of phosphorylation ex vivo." evidence="4">
    <original>Y</original>
    <variation>F</variation>
    <location>
        <position position="42"/>
    </location>
</feature>
<feature type="mutagenesis site" description="Partial loss of phosphorylation ex vivo." evidence="4">
    <original>Y</original>
    <variation>F</variation>
    <location>
        <position position="62"/>
    </location>
</feature>
<feature type="mutagenesis site" description="Partial loss of nuclear and nucleolar localization." evidence="8">
    <original>RAKRRDRRRR</original>
    <variation>KAKKKDKKKK</variation>
    <location>
        <begin position="66"/>
        <end position="75"/>
    </location>
</feature>
<feature type="mutagenesis site" description="Partial loss of nuclear and nucleolar localization.">
    <original>RAKRRDRR</original>
    <variation>KAKKKDKK</variation>
    <location>
        <begin position="66"/>
        <end position="73"/>
    </location>
</feature>
<feature type="mutagenesis site" description="Complete loss of nuclear and nucleolar localization.">
    <original>RAKRR</original>
    <variation>AAAA</variation>
    <location>
        <begin position="66"/>
        <end position="70"/>
    </location>
</feature>
<feature type="mutagenesis site" description="Partial loss of nuclear and nucleolar localization.">
    <original>RAKRR</original>
    <variation>KAKKK</variation>
    <location>
        <begin position="66"/>
        <end position="70"/>
    </location>
</feature>
<feature type="mutagenesis site" description="Partial loss of nuclear and nucleolar localization.">
    <original>R</original>
    <variation>K</variation>
    <location>
        <position position="66"/>
    </location>
</feature>
<feature type="mutagenesis site" description="Complete loss of nuclear and nucleolar localization.">
    <original>RR</original>
    <variation>AA</variation>
    <location>
        <begin position="69"/>
        <end position="70"/>
    </location>
</feature>
<feature type="mutagenesis site" description="Complete loss of nuclear and nucleolar localization.">
    <original>RRRR</original>
    <variation>AAAA</variation>
    <location>
        <begin position="72"/>
        <end position="75"/>
    </location>
</feature>
<feature type="mutagenesis site" description="Complete loss of nuclear and nucleolar localization.">
    <original>RRR</original>
    <variation>AAA</variation>
    <location>
        <begin position="73"/>
        <end position="75"/>
    </location>
</feature>
<feature type="mutagenesis site" description="Complete loss of nuclear and nucleolar localization.">
    <original>RR</original>
    <variation>AA</variation>
    <location>
        <begin position="74"/>
        <end position="75"/>
    </location>
</feature>
<name>E4RF4_ADE02</name>